<protein>
    <recommendedName>
        <fullName evidence="1">S-adenosylmethionine synthase</fullName>
        <shortName evidence="1">AdoMet synthase</shortName>
        <ecNumber evidence="1">2.5.1.6</ecNumber>
    </recommendedName>
    <alternativeName>
        <fullName evidence="1">Methionine adenosyltransferase</fullName>
    </alternativeName>
</protein>
<reference key="1">
    <citation type="submission" date="2006-10" db="EMBL/GenBank/DDBJ databases">
        <title>Complete sequence of Methanosaeta thermophila PT.</title>
        <authorList>
            <consortium name="US DOE Joint Genome Institute"/>
            <person name="Copeland A."/>
            <person name="Lucas S."/>
            <person name="Lapidus A."/>
            <person name="Barry K."/>
            <person name="Detter J.C."/>
            <person name="Glavina del Rio T."/>
            <person name="Hammon N."/>
            <person name="Israni S."/>
            <person name="Pitluck S."/>
            <person name="Chain P."/>
            <person name="Malfatti S."/>
            <person name="Shin M."/>
            <person name="Vergez L."/>
            <person name="Schmutz J."/>
            <person name="Larimer F."/>
            <person name="Land M."/>
            <person name="Hauser L."/>
            <person name="Kyrpides N."/>
            <person name="Kim E."/>
            <person name="Smith K.S."/>
            <person name="Ingram-Smith C."/>
            <person name="Richardson P."/>
        </authorList>
    </citation>
    <scope>NUCLEOTIDE SEQUENCE [LARGE SCALE GENOMIC DNA]</scope>
    <source>
        <strain>DSM 6194 / JCM 14653 / NBRC 101360 / PT</strain>
    </source>
</reference>
<organism>
    <name type="scientific">Methanothrix thermoacetophila (strain DSM 6194 / JCM 14653 / NBRC 101360 / PT)</name>
    <name type="common">Methanosaeta thermophila</name>
    <dbReference type="NCBI Taxonomy" id="349307"/>
    <lineage>
        <taxon>Archaea</taxon>
        <taxon>Methanobacteriati</taxon>
        <taxon>Methanobacteriota</taxon>
        <taxon>Stenosarchaea group</taxon>
        <taxon>Methanomicrobia</taxon>
        <taxon>Methanotrichales</taxon>
        <taxon>Methanotrichaceae</taxon>
        <taxon>Methanothrix</taxon>
    </lineage>
</organism>
<dbReference type="EC" id="2.5.1.6" evidence="1"/>
<dbReference type="EMBL" id="CP000477">
    <property type="protein sequence ID" value="ABK14516.1"/>
    <property type="molecule type" value="Genomic_DNA"/>
</dbReference>
<dbReference type="RefSeq" id="WP_011695912.1">
    <property type="nucleotide sequence ID" value="NC_008553.1"/>
</dbReference>
<dbReference type="SMR" id="A0B742"/>
<dbReference type="STRING" id="349307.Mthe_0726"/>
<dbReference type="GeneID" id="4461877"/>
<dbReference type="KEGG" id="mtp:Mthe_0726"/>
<dbReference type="HOGENOM" id="CLU_057642_0_0_2"/>
<dbReference type="OrthoDB" id="204488at2157"/>
<dbReference type="UniPathway" id="UPA00315">
    <property type="reaction ID" value="UER00080"/>
</dbReference>
<dbReference type="Proteomes" id="UP000000674">
    <property type="component" value="Chromosome"/>
</dbReference>
<dbReference type="GO" id="GO:0005524">
    <property type="term" value="F:ATP binding"/>
    <property type="evidence" value="ECO:0007669"/>
    <property type="project" value="UniProtKB-UniRule"/>
</dbReference>
<dbReference type="GO" id="GO:0000287">
    <property type="term" value="F:magnesium ion binding"/>
    <property type="evidence" value="ECO:0007669"/>
    <property type="project" value="UniProtKB-UniRule"/>
</dbReference>
<dbReference type="GO" id="GO:0004478">
    <property type="term" value="F:methionine adenosyltransferase activity"/>
    <property type="evidence" value="ECO:0007669"/>
    <property type="project" value="UniProtKB-UniRule"/>
</dbReference>
<dbReference type="GO" id="GO:0006730">
    <property type="term" value="P:one-carbon metabolic process"/>
    <property type="evidence" value="ECO:0007669"/>
    <property type="project" value="UniProtKB-KW"/>
</dbReference>
<dbReference type="GO" id="GO:0006556">
    <property type="term" value="P:S-adenosylmethionine biosynthetic process"/>
    <property type="evidence" value="ECO:0007669"/>
    <property type="project" value="UniProtKB-UniRule"/>
</dbReference>
<dbReference type="Gene3D" id="3.30.300.10">
    <property type="match status" value="1"/>
</dbReference>
<dbReference type="Gene3D" id="3.30.300.280">
    <property type="entry name" value="S-adenosylmethionine synthetase, C-terminal domain"/>
    <property type="match status" value="2"/>
</dbReference>
<dbReference type="HAMAP" id="MF_00136">
    <property type="entry name" value="S_AdoMet_synth2"/>
    <property type="match status" value="1"/>
</dbReference>
<dbReference type="InterPro" id="IPR027790">
    <property type="entry name" value="AdoMet_synthase_2_family"/>
</dbReference>
<dbReference type="InterPro" id="IPR042544">
    <property type="entry name" value="AdoMet_synthase_3"/>
</dbReference>
<dbReference type="InterPro" id="IPR002795">
    <property type="entry name" value="S-AdoMet_synthetase_arc"/>
</dbReference>
<dbReference type="NCBIfam" id="NF003364">
    <property type="entry name" value="PRK04439.1-3"/>
    <property type="match status" value="1"/>
</dbReference>
<dbReference type="NCBIfam" id="NF003366">
    <property type="entry name" value="PRK04439.1-5"/>
    <property type="match status" value="1"/>
</dbReference>
<dbReference type="PANTHER" id="PTHR36697">
    <property type="entry name" value="S-ADENOSYLMETHIONINE SYNTHASE"/>
    <property type="match status" value="1"/>
</dbReference>
<dbReference type="PANTHER" id="PTHR36697:SF1">
    <property type="entry name" value="S-ADENOSYLMETHIONINE SYNTHASE"/>
    <property type="match status" value="1"/>
</dbReference>
<dbReference type="Pfam" id="PF01941">
    <property type="entry name" value="AdoMet_Synthase"/>
    <property type="match status" value="1"/>
</dbReference>
<evidence type="ECO:0000255" key="1">
    <source>
        <dbReference type="HAMAP-Rule" id="MF_00136"/>
    </source>
</evidence>
<accession>A0B742</accession>
<gene>
    <name evidence="1" type="primary">mat</name>
    <name type="ordered locus">Mthe_0726</name>
</gene>
<name>METK_METTP</name>
<proteinExistence type="inferred from homology"/>
<comment type="function">
    <text evidence="1">Catalyzes the formation of S-adenosylmethionine from methionine and ATP.</text>
</comment>
<comment type="catalytic activity">
    <reaction evidence="1">
        <text>L-methionine + ATP + H2O = S-adenosyl-L-methionine + phosphate + diphosphate</text>
        <dbReference type="Rhea" id="RHEA:21080"/>
        <dbReference type="ChEBI" id="CHEBI:15377"/>
        <dbReference type="ChEBI" id="CHEBI:30616"/>
        <dbReference type="ChEBI" id="CHEBI:33019"/>
        <dbReference type="ChEBI" id="CHEBI:43474"/>
        <dbReference type="ChEBI" id="CHEBI:57844"/>
        <dbReference type="ChEBI" id="CHEBI:59789"/>
        <dbReference type="EC" id="2.5.1.6"/>
    </reaction>
</comment>
<comment type="cofactor">
    <cofactor evidence="1">
        <name>Mg(2+)</name>
        <dbReference type="ChEBI" id="CHEBI:18420"/>
    </cofactor>
</comment>
<comment type="pathway">
    <text evidence="1">Amino-acid biosynthesis; S-adenosyl-L-methionine biosynthesis; S-adenosyl-L-methionine from L-methionine: step 1/1.</text>
</comment>
<comment type="similarity">
    <text evidence="1">Belongs to the AdoMet synthase 2 family.</text>
</comment>
<feature type="chain" id="PRO_1000196741" description="S-adenosylmethionine synthase">
    <location>
        <begin position="1"/>
        <end position="399"/>
    </location>
</feature>
<feature type="binding site" evidence="1">
    <location>
        <begin position="136"/>
        <end position="141"/>
    </location>
    <ligand>
        <name>ATP</name>
        <dbReference type="ChEBI" id="CHEBI:30616"/>
    </ligand>
</feature>
<keyword id="KW-0067">ATP-binding</keyword>
<keyword id="KW-0460">Magnesium</keyword>
<keyword id="KW-0547">Nucleotide-binding</keyword>
<keyword id="KW-0554">One-carbon metabolism</keyword>
<keyword id="KW-1185">Reference proteome</keyword>
<keyword id="KW-0808">Transferase</keyword>
<sequence length="399" mass="44179">MTRNIRVEELTQRPVEKQKIEVVERKGLGHPDSVADGIAEEISRALCKEYIERFGRVLHHNTDKIQIVAGRSRPAFGGGEVIQPQYILLTGRATRVCGDVEVPVDAIALRTARNHLKRALRNLDLDTHVIIDCKIGTGSADLCDIFDRDASTVPSANDTSYGVGYAPLSETERIVYSTEQELLSLRSRIPAIGEDIKVMGLREDDTIYLTIACAMVDRYIDDLDHYVETKKEIVEEISAKAQSMTRRRVDVQMNVGDNIATGSVYITVTGTSAEMGDDGAVGRGNRANGLITPNRPMSLEATSGKNPINHVGKIYNLLSNLIAKEIAEEVDGVEEVYVKILSQIGKPISQPHIASVQLVLKEGVRLSSAHARAREITDRWLEDIPRVQQMIFHGELQTY</sequence>